<protein>
    <recommendedName>
        <fullName evidence="1">Large ribosomal subunit protein uL24</fullName>
    </recommendedName>
    <alternativeName>
        <fullName evidence="2">50S ribosomal protein L24</fullName>
    </alternativeName>
</protein>
<accession>A3MWZ8</accession>
<evidence type="ECO:0000255" key="1">
    <source>
        <dbReference type="HAMAP-Rule" id="MF_01326"/>
    </source>
</evidence>
<evidence type="ECO:0000305" key="2"/>
<dbReference type="EMBL" id="CP000561">
    <property type="protein sequence ID" value="ABO09165.1"/>
    <property type="molecule type" value="Genomic_DNA"/>
</dbReference>
<dbReference type="RefSeq" id="WP_011850424.1">
    <property type="nucleotide sequence ID" value="NC_009073.1"/>
</dbReference>
<dbReference type="PDB" id="9E6Q">
    <property type="method" value="EM"/>
    <property type="resolution" value="1.95 A"/>
    <property type="chains" value="AV=1-128"/>
</dbReference>
<dbReference type="PDB" id="9E71">
    <property type="method" value="EM"/>
    <property type="resolution" value="2.36 A"/>
    <property type="chains" value="AV=1-128"/>
</dbReference>
<dbReference type="PDB" id="9E7F">
    <property type="method" value="EM"/>
    <property type="resolution" value="2.53 A"/>
    <property type="chains" value="AV=1-128"/>
</dbReference>
<dbReference type="PDBsum" id="9E6Q"/>
<dbReference type="PDBsum" id="9E71"/>
<dbReference type="PDBsum" id="9E7F"/>
<dbReference type="EMDB" id="EMD-47578"/>
<dbReference type="EMDB" id="EMD-47628"/>
<dbReference type="EMDB" id="EMD-47668"/>
<dbReference type="SMR" id="A3MWZ8"/>
<dbReference type="STRING" id="410359.Pcal_1748"/>
<dbReference type="GeneID" id="4909816"/>
<dbReference type="KEGG" id="pcl:Pcal_1748"/>
<dbReference type="eggNOG" id="arCOG04094">
    <property type="taxonomic scope" value="Archaea"/>
</dbReference>
<dbReference type="HOGENOM" id="CLU_093240_2_1_2"/>
<dbReference type="OrthoDB" id="10899at2157"/>
<dbReference type="Proteomes" id="UP000001431">
    <property type="component" value="Chromosome"/>
</dbReference>
<dbReference type="GO" id="GO:0015934">
    <property type="term" value="C:large ribosomal subunit"/>
    <property type="evidence" value="ECO:0007669"/>
    <property type="project" value="InterPro"/>
</dbReference>
<dbReference type="GO" id="GO:0019843">
    <property type="term" value="F:rRNA binding"/>
    <property type="evidence" value="ECO:0007669"/>
    <property type="project" value="UniProtKB-UniRule"/>
</dbReference>
<dbReference type="GO" id="GO:0003735">
    <property type="term" value="F:structural constituent of ribosome"/>
    <property type="evidence" value="ECO:0007669"/>
    <property type="project" value="InterPro"/>
</dbReference>
<dbReference type="GO" id="GO:0006412">
    <property type="term" value="P:translation"/>
    <property type="evidence" value="ECO:0007669"/>
    <property type="project" value="UniProtKB-UniRule"/>
</dbReference>
<dbReference type="CDD" id="cd06089">
    <property type="entry name" value="KOW_RPL26"/>
    <property type="match status" value="1"/>
</dbReference>
<dbReference type="FunFam" id="2.30.30.30:FF:000009">
    <property type="entry name" value="60S ribosomal protein L26"/>
    <property type="match status" value="1"/>
</dbReference>
<dbReference type="Gene3D" id="2.30.30.30">
    <property type="match status" value="1"/>
</dbReference>
<dbReference type="HAMAP" id="MF_01326_A">
    <property type="entry name" value="Ribosomal_uL24_A"/>
    <property type="match status" value="1"/>
</dbReference>
<dbReference type="InterPro" id="IPR005824">
    <property type="entry name" value="KOW"/>
</dbReference>
<dbReference type="InterPro" id="IPR014722">
    <property type="entry name" value="Rib_uL2_dom2"/>
</dbReference>
<dbReference type="InterPro" id="IPR005825">
    <property type="entry name" value="Ribosomal_uL24_CS"/>
</dbReference>
<dbReference type="InterPro" id="IPR005756">
    <property type="entry name" value="Ribosomal_uL24_euk/arc"/>
</dbReference>
<dbReference type="InterPro" id="IPR041988">
    <property type="entry name" value="Ribosomal_uL24_KOW"/>
</dbReference>
<dbReference type="InterPro" id="IPR008991">
    <property type="entry name" value="Translation_prot_SH3-like_sf"/>
</dbReference>
<dbReference type="NCBIfam" id="TIGR01080">
    <property type="entry name" value="rplX_A_E"/>
    <property type="match status" value="1"/>
</dbReference>
<dbReference type="PANTHER" id="PTHR11143">
    <property type="entry name" value="60S RIBOSOMAL PROTEIN L26 FAMILY MEMBER"/>
    <property type="match status" value="1"/>
</dbReference>
<dbReference type="Pfam" id="PF00467">
    <property type="entry name" value="KOW"/>
    <property type="match status" value="1"/>
</dbReference>
<dbReference type="Pfam" id="PF16906">
    <property type="entry name" value="Ribosomal_L26"/>
    <property type="match status" value="1"/>
</dbReference>
<dbReference type="SMART" id="SM00739">
    <property type="entry name" value="KOW"/>
    <property type="match status" value="1"/>
</dbReference>
<dbReference type="SUPFAM" id="SSF50104">
    <property type="entry name" value="Translation proteins SH3-like domain"/>
    <property type="match status" value="1"/>
</dbReference>
<dbReference type="PROSITE" id="PS01108">
    <property type="entry name" value="RIBOSOMAL_L24"/>
    <property type="match status" value="1"/>
</dbReference>
<comment type="function">
    <text evidence="1">One of two assembly initiator proteins, it binds directly to the 5'-end of the 23S rRNA, where it nucleates assembly of the 50S subunit.</text>
</comment>
<comment type="function">
    <text evidence="1">Located at the polypeptide exit tunnel on the outside of the subunit.</text>
</comment>
<comment type="subunit">
    <text evidence="1">Part of the 50S ribosomal subunit.</text>
</comment>
<comment type="similarity">
    <text evidence="1">Belongs to the universal ribosomal protein uL24 family.</text>
</comment>
<reference key="1">
    <citation type="submission" date="2007-02" db="EMBL/GenBank/DDBJ databases">
        <title>Complete sequence of Pyrobaculum calidifontis JCM 11548.</title>
        <authorList>
            <consortium name="US DOE Joint Genome Institute"/>
            <person name="Copeland A."/>
            <person name="Lucas S."/>
            <person name="Lapidus A."/>
            <person name="Barry K."/>
            <person name="Glavina del Rio T."/>
            <person name="Dalin E."/>
            <person name="Tice H."/>
            <person name="Pitluck S."/>
            <person name="Chain P."/>
            <person name="Malfatti S."/>
            <person name="Shin M."/>
            <person name="Vergez L."/>
            <person name="Schmutz J."/>
            <person name="Larimer F."/>
            <person name="Land M."/>
            <person name="Hauser L."/>
            <person name="Kyrpides N."/>
            <person name="Mikhailova N."/>
            <person name="Cozen A.E."/>
            <person name="Fitz-Gibbon S.T."/>
            <person name="House C.H."/>
            <person name="Saltikov C."/>
            <person name="Lowe T.M."/>
            <person name="Richardson P."/>
        </authorList>
    </citation>
    <scope>NUCLEOTIDE SEQUENCE [LARGE SCALE GENOMIC DNA]</scope>
    <source>
        <strain>DSM 21063 / JCM 11548 / VA1</strain>
    </source>
</reference>
<name>RL24_PYRCJ</name>
<gene>
    <name evidence="1" type="primary">rpl24</name>
    <name type="ordered locus">Pcal_1748</name>
</gene>
<feature type="chain" id="PRO_1000052285" description="Large ribosomal subunit protein uL24">
    <location>
        <begin position="1"/>
        <end position="128"/>
    </location>
</feature>
<sequence>MPFTASAQPRKQRLSLYAAPLHLRRKLLNAKLSPELQKKLGVKRLPVRRGDTVLIMRGDFKGVTGKVVKVDLKRVRIFVEGATRTNSRGQTVYYPIHPSKVMIVDVDLSDKARQKLIERRKRGQHGSS</sequence>
<proteinExistence type="evidence at protein level"/>
<organism>
    <name type="scientific">Pyrobaculum calidifontis (strain DSM 21063 / JCM 11548 / VA1)</name>
    <dbReference type="NCBI Taxonomy" id="410359"/>
    <lineage>
        <taxon>Archaea</taxon>
        <taxon>Thermoproteota</taxon>
        <taxon>Thermoprotei</taxon>
        <taxon>Thermoproteales</taxon>
        <taxon>Thermoproteaceae</taxon>
        <taxon>Pyrobaculum</taxon>
    </lineage>
</organism>
<keyword id="KW-0002">3D-structure</keyword>
<keyword id="KW-0687">Ribonucleoprotein</keyword>
<keyword id="KW-0689">Ribosomal protein</keyword>
<keyword id="KW-0694">RNA-binding</keyword>
<keyword id="KW-0699">rRNA-binding</keyword>